<evidence type="ECO:0000250" key="1">
    <source>
        <dbReference type="UniProtKB" id="O42662"/>
    </source>
</evidence>
<evidence type="ECO:0000250" key="2">
    <source>
        <dbReference type="UniProtKB" id="Q86W50"/>
    </source>
</evidence>
<evidence type="ECO:0000256" key="3">
    <source>
        <dbReference type="SAM" id="MobiDB-lite"/>
    </source>
</evidence>
<evidence type="ECO:0000305" key="4"/>
<reference key="1">
    <citation type="journal article" date="2002" name="Nature">
        <title>Sequence and analysis of chromosome 2 of Dictyostelium discoideum.</title>
        <authorList>
            <person name="Gloeckner G."/>
            <person name="Eichinger L."/>
            <person name="Szafranski K."/>
            <person name="Pachebat J.A."/>
            <person name="Bankier A.T."/>
            <person name="Dear P.H."/>
            <person name="Lehmann R."/>
            <person name="Baumgart C."/>
            <person name="Parra G."/>
            <person name="Abril J.F."/>
            <person name="Guigo R."/>
            <person name="Kumpf K."/>
            <person name="Tunggal B."/>
            <person name="Cox E.C."/>
            <person name="Quail M.A."/>
            <person name="Platzer M."/>
            <person name="Rosenthal A."/>
            <person name="Noegel A.A."/>
        </authorList>
    </citation>
    <scope>NUCLEOTIDE SEQUENCE [LARGE SCALE GENOMIC DNA]</scope>
    <source>
        <strain>AX4</strain>
    </source>
</reference>
<reference key="2">
    <citation type="journal article" date="2005" name="Nature">
        <title>The genome of the social amoeba Dictyostelium discoideum.</title>
        <authorList>
            <person name="Eichinger L."/>
            <person name="Pachebat J.A."/>
            <person name="Gloeckner G."/>
            <person name="Rajandream M.A."/>
            <person name="Sucgang R."/>
            <person name="Berriman M."/>
            <person name="Song J."/>
            <person name="Olsen R."/>
            <person name="Szafranski K."/>
            <person name="Xu Q."/>
            <person name="Tunggal B."/>
            <person name="Kummerfeld S."/>
            <person name="Madera M."/>
            <person name="Konfortov B.A."/>
            <person name="Rivero F."/>
            <person name="Bankier A.T."/>
            <person name="Lehmann R."/>
            <person name="Hamlin N."/>
            <person name="Davies R."/>
            <person name="Gaudet P."/>
            <person name="Fey P."/>
            <person name="Pilcher K."/>
            <person name="Chen G."/>
            <person name="Saunders D."/>
            <person name="Sodergren E.J."/>
            <person name="Davis P."/>
            <person name="Kerhornou A."/>
            <person name="Nie X."/>
            <person name="Hall N."/>
            <person name="Anjard C."/>
            <person name="Hemphill L."/>
            <person name="Bason N."/>
            <person name="Farbrother P."/>
            <person name="Desany B."/>
            <person name="Just E."/>
            <person name="Morio T."/>
            <person name="Rost R."/>
            <person name="Churcher C.M."/>
            <person name="Cooper J."/>
            <person name="Haydock S."/>
            <person name="van Driessche N."/>
            <person name="Cronin A."/>
            <person name="Goodhead I."/>
            <person name="Muzny D.M."/>
            <person name="Mourier T."/>
            <person name="Pain A."/>
            <person name="Lu M."/>
            <person name="Harper D."/>
            <person name="Lindsay R."/>
            <person name="Hauser H."/>
            <person name="James K.D."/>
            <person name="Quiles M."/>
            <person name="Madan Babu M."/>
            <person name="Saito T."/>
            <person name="Buchrieser C."/>
            <person name="Wardroper A."/>
            <person name="Felder M."/>
            <person name="Thangavelu M."/>
            <person name="Johnson D."/>
            <person name="Knights A."/>
            <person name="Loulseged H."/>
            <person name="Mungall K.L."/>
            <person name="Oliver K."/>
            <person name="Price C."/>
            <person name="Quail M.A."/>
            <person name="Urushihara H."/>
            <person name="Hernandez J."/>
            <person name="Rabbinowitsch E."/>
            <person name="Steffen D."/>
            <person name="Sanders M."/>
            <person name="Ma J."/>
            <person name="Kohara Y."/>
            <person name="Sharp S."/>
            <person name="Simmonds M.N."/>
            <person name="Spiegler S."/>
            <person name="Tivey A."/>
            <person name="Sugano S."/>
            <person name="White B."/>
            <person name="Walker D."/>
            <person name="Woodward J.R."/>
            <person name="Winckler T."/>
            <person name="Tanaka Y."/>
            <person name="Shaulsky G."/>
            <person name="Schleicher M."/>
            <person name="Weinstock G.M."/>
            <person name="Rosenthal A."/>
            <person name="Cox E.C."/>
            <person name="Chisholm R.L."/>
            <person name="Gibbs R.A."/>
            <person name="Loomis W.F."/>
            <person name="Platzer M."/>
            <person name="Kay R.R."/>
            <person name="Williams J.G."/>
            <person name="Dear P.H."/>
            <person name="Noegel A.A."/>
            <person name="Barrell B.G."/>
            <person name="Kuspa A."/>
        </authorList>
    </citation>
    <scope>NUCLEOTIDE SEQUENCE [LARGE SCALE GENOMIC DNA]</scope>
    <source>
        <strain>AX4</strain>
    </source>
</reference>
<name>MET16_DICDI</name>
<accession>Q554C9</accession>
<accession>Q86I21</accession>
<proteinExistence type="inferred from homology"/>
<feature type="chain" id="PRO_0000339419" description="U6 small nuclear RNA (adenine-(43)-N(6))-methyltransferase">
    <location>
        <begin position="1"/>
        <end position="568"/>
    </location>
</feature>
<feature type="region of interest" description="Disordered" evidence="3">
    <location>
        <begin position="1"/>
        <end position="20"/>
    </location>
</feature>
<feature type="region of interest" description="Disordered" evidence="3">
    <location>
        <begin position="363"/>
        <end position="383"/>
    </location>
</feature>
<feature type="region of interest" description="Disordered" evidence="3">
    <location>
        <begin position="403"/>
        <end position="431"/>
    </location>
</feature>
<feature type="region of interest" description="Disordered" evidence="3">
    <location>
        <begin position="503"/>
        <end position="538"/>
    </location>
</feature>
<feature type="compositionally biased region" description="Basic and acidic residues" evidence="3">
    <location>
        <begin position="7"/>
        <end position="20"/>
    </location>
</feature>
<feature type="compositionally biased region" description="Low complexity" evidence="3">
    <location>
        <begin position="365"/>
        <end position="383"/>
    </location>
</feature>
<feature type="compositionally biased region" description="Low complexity" evidence="3">
    <location>
        <begin position="409"/>
        <end position="431"/>
    </location>
</feature>
<feature type="compositionally biased region" description="Low complexity" evidence="3">
    <location>
        <begin position="507"/>
        <end position="538"/>
    </location>
</feature>
<feature type="binding site" evidence="2">
    <location>
        <position position="117"/>
    </location>
    <ligand>
        <name>S-adenosyl-L-methionine</name>
        <dbReference type="ChEBI" id="CHEBI:59789"/>
    </ligand>
</feature>
<feature type="binding site" evidence="2">
    <location>
        <position position="151"/>
    </location>
    <ligand>
        <name>S-adenosyl-L-methionine</name>
        <dbReference type="ChEBI" id="CHEBI:59789"/>
    </ligand>
</feature>
<feature type="binding site" evidence="2">
    <location>
        <position position="175"/>
    </location>
    <ligand>
        <name>S-adenosyl-L-methionine</name>
        <dbReference type="ChEBI" id="CHEBI:59789"/>
    </ligand>
</feature>
<feature type="binding site" evidence="2">
    <location>
        <position position="250"/>
    </location>
    <ligand>
        <name>S-adenosyl-L-methionine</name>
        <dbReference type="ChEBI" id="CHEBI:59789"/>
    </ligand>
</feature>
<keyword id="KW-0489">Methyltransferase</keyword>
<keyword id="KW-1185">Reference proteome</keyword>
<keyword id="KW-0949">S-adenosyl-L-methionine</keyword>
<keyword id="KW-0808">Transferase</keyword>
<dbReference type="EC" id="2.1.1.346" evidence="1 2"/>
<dbReference type="EMBL" id="AAFI02000013">
    <property type="protein sequence ID" value="EAL69882.1"/>
    <property type="molecule type" value="Genomic_DNA"/>
</dbReference>
<dbReference type="RefSeq" id="XP_643782.1">
    <property type="nucleotide sequence ID" value="XM_638690.1"/>
</dbReference>
<dbReference type="SMR" id="Q554C9"/>
<dbReference type="FunCoup" id="Q554C9">
    <property type="interactions" value="861"/>
</dbReference>
<dbReference type="PaxDb" id="44689-DDB0203108"/>
<dbReference type="EnsemblProtists" id="EAL69882">
    <property type="protein sequence ID" value="EAL69882"/>
    <property type="gene ID" value="DDB_G0275203"/>
</dbReference>
<dbReference type="GeneID" id="8619827"/>
<dbReference type="KEGG" id="ddi:DDB_G0275203"/>
<dbReference type="dictyBase" id="DDB_G0275203"/>
<dbReference type="VEuPathDB" id="AmoebaDB:DDB_G0275203"/>
<dbReference type="eggNOG" id="KOG2912">
    <property type="taxonomic scope" value="Eukaryota"/>
</dbReference>
<dbReference type="HOGENOM" id="CLU_480155_0_0_1"/>
<dbReference type="InParanoid" id="Q554C9"/>
<dbReference type="OMA" id="CNISWIV"/>
<dbReference type="PhylomeDB" id="Q554C9"/>
<dbReference type="PRO" id="PR:Q554C9"/>
<dbReference type="Proteomes" id="UP000002195">
    <property type="component" value="Chromosome 2"/>
</dbReference>
<dbReference type="GO" id="GO:0005634">
    <property type="term" value="C:nucleus"/>
    <property type="evidence" value="ECO:0000318"/>
    <property type="project" value="GO_Central"/>
</dbReference>
<dbReference type="GO" id="GO:0003676">
    <property type="term" value="F:nucleic acid binding"/>
    <property type="evidence" value="ECO:0007669"/>
    <property type="project" value="InterPro"/>
</dbReference>
<dbReference type="GO" id="GO:0120048">
    <property type="term" value="F:U6 snRNA (adenine-(43)-N(6))-methyltransferase activity"/>
    <property type="evidence" value="ECO:0007669"/>
    <property type="project" value="UniProtKB-EC"/>
</dbReference>
<dbReference type="GO" id="GO:0070475">
    <property type="term" value="P:rRNA base methylation"/>
    <property type="evidence" value="ECO:0000318"/>
    <property type="project" value="GO_Central"/>
</dbReference>
<dbReference type="CDD" id="cd02440">
    <property type="entry name" value="AdoMet_MTases"/>
    <property type="match status" value="1"/>
</dbReference>
<dbReference type="Gene3D" id="3.40.50.150">
    <property type="entry name" value="Vaccinia Virus protein VP39"/>
    <property type="match status" value="1"/>
</dbReference>
<dbReference type="InterPro" id="IPR002052">
    <property type="entry name" value="DNA_methylase_N6_adenine_CS"/>
</dbReference>
<dbReference type="InterPro" id="IPR017182">
    <property type="entry name" value="METTL16/PsiM"/>
</dbReference>
<dbReference type="InterPro" id="IPR010286">
    <property type="entry name" value="METTL16/RlmF"/>
</dbReference>
<dbReference type="InterPro" id="IPR029063">
    <property type="entry name" value="SAM-dependent_MTases_sf"/>
</dbReference>
<dbReference type="PANTHER" id="PTHR13393:SF0">
    <property type="entry name" value="RNA N6-ADENOSINE-METHYLTRANSFERASE METTL16"/>
    <property type="match status" value="1"/>
</dbReference>
<dbReference type="PANTHER" id="PTHR13393">
    <property type="entry name" value="SAM-DEPENDENT METHYLTRANSFERASE"/>
    <property type="match status" value="1"/>
</dbReference>
<dbReference type="Pfam" id="PF05971">
    <property type="entry name" value="Methyltransf_10"/>
    <property type="match status" value="2"/>
</dbReference>
<dbReference type="PIRSF" id="PIRSF037350">
    <property type="entry name" value="Mtase_ZK1128_prd"/>
    <property type="match status" value="1"/>
</dbReference>
<dbReference type="SUPFAM" id="SSF53335">
    <property type="entry name" value="S-adenosyl-L-methionine-dependent methyltransferases"/>
    <property type="match status" value="1"/>
</dbReference>
<comment type="function">
    <text evidence="1 2">RNA N6-methyltransferase that mediates N6-methylation of adenine of U6 small nuclear RNA (U6 snRNA).</text>
</comment>
<comment type="catalytic activity">
    <reaction evidence="1 2">
        <text>adenosine in U6 snRNA + S-adenosyl-L-methionine = N(6)-methyladenosine in U6 snRNA + S-adenosyl-L-homocysteine + H(+)</text>
        <dbReference type="Rhea" id="RHEA:52808"/>
        <dbReference type="Rhea" id="RHEA-COMP:13573"/>
        <dbReference type="Rhea" id="RHEA-COMP:13574"/>
        <dbReference type="ChEBI" id="CHEBI:15378"/>
        <dbReference type="ChEBI" id="CHEBI:57856"/>
        <dbReference type="ChEBI" id="CHEBI:59789"/>
        <dbReference type="ChEBI" id="CHEBI:74411"/>
        <dbReference type="ChEBI" id="CHEBI:74449"/>
        <dbReference type="EC" id="2.1.1.346"/>
    </reaction>
</comment>
<comment type="similarity">
    <text evidence="4">Belongs to the methyltransferase superfamily. METTL16/RlmF family.</text>
</comment>
<protein>
    <recommendedName>
        <fullName>U6 small nuclear RNA (adenine-(43)-N(6))-methyltransferase</fullName>
        <ecNumber evidence="1 2">2.1.1.346</ecNumber>
    </recommendedName>
</protein>
<sequence length="568" mass="66632">MSEIDTNDIKKEMDNKNYRDPTDNKELLKWTKKKRKRSNDSMHINNFYRYNPPNFKLLASKYPTFDKYIINKTEKIYNIDWKDSNATKELTRVLLDHDFGLRIELPDNYLCPTLTLRINYLYWISDQLKNLKIILNDNDNDNKIIKGIDIGTGTSCIFPLLGAKLFNNWSFIGIDIDDKVLEYAQNNITINSLNSKITLFKNEKNSDILLKLLNYKEGSNTFNSSNDDHQDNHDDDDDDEEYFADFCLCNPPFFKDLNENNNNKNNNPKSNCTGSVNEMVTDGGEFEFVKRIIKESFQLKCKIRFYTTMIGRKVNLNPLINILIKQYYLPKNQIQTTELVQGNTSRWVLSWYFLNKSTNLETKENNNINNNNNNNNNNNINNNNQFLTRMERRKLYREGITLNLDSDDNNNNNNNNNNNNNNNNNNNNNNNNNNNKIVEIIKLILDNNDIIYKTDENNIKYECKYLLNNVIVGSSIKLDRDIEFLFTIFIDLTTRLILFKPIDPKINNNNNNNNNNNNNNNNNNNNNNNNNNNNNKNNNNSCDGEIINSNLFFILKFLENIKNEIKLK</sequence>
<gene>
    <name type="ORF">DDB_G0275203</name>
</gene>
<organism>
    <name type="scientific">Dictyostelium discoideum</name>
    <name type="common">Social amoeba</name>
    <dbReference type="NCBI Taxonomy" id="44689"/>
    <lineage>
        <taxon>Eukaryota</taxon>
        <taxon>Amoebozoa</taxon>
        <taxon>Evosea</taxon>
        <taxon>Eumycetozoa</taxon>
        <taxon>Dictyostelia</taxon>
        <taxon>Dictyosteliales</taxon>
        <taxon>Dictyosteliaceae</taxon>
        <taxon>Dictyostelium</taxon>
    </lineage>
</organism>